<evidence type="ECO:0000255" key="1">
    <source>
        <dbReference type="HAMAP-Rule" id="MF_01851"/>
    </source>
</evidence>
<protein>
    <recommendedName>
        <fullName evidence="1">UPF0637 protein RBAM_014510</fullName>
    </recommendedName>
</protein>
<organism>
    <name type="scientific">Bacillus velezensis (strain DSM 23117 / BGSC 10A6 / LMG 26770 / FZB42)</name>
    <name type="common">Bacillus amyloliquefaciens subsp. plantarum</name>
    <dbReference type="NCBI Taxonomy" id="326423"/>
    <lineage>
        <taxon>Bacteria</taxon>
        <taxon>Bacillati</taxon>
        <taxon>Bacillota</taxon>
        <taxon>Bacilli</taxon>
        <taxon>Bacillales</taxon>
        <taxon>Bacillaceae</taxon>
        <taxon>Bacillus</taxon>
        <taxon>Bacillus amyloliquefaciens group</taxon>
    </lineage>
</organism>
<name>Y1451_BACVZ</name>
<reference key="1">
    <citation type="journal article" date="2007" name="Nat. Biotechnol.">
        <title>Comparative analysis of the complete genome sequence of the plant growth-promoting bacterium Bacillus amyloliquefaciens FZB42.</title>
        <authorList>
            <person name="Chen X.H."/>
            <person name="Koumoutsi A."/>
            <person name="Scholz R."/>
            <person name="Eisenreich A."/>
            <person name="Schneider K."/>
            <person name="Heinemeyer I."/>
            <person name="Morgenstern B."/>
            <person name="Voss B."/>
            <person name="Hess W.R."/>
            <person name="Reva O."/>
            <person name="Junge H."/>
            <person name="Voigt B."/>
            <person name="Jungblut P.R."/>
            <person name="Vater J."/>
            <person name="Suessmuth R."/>
            <person name="Liesegang H."/>
            <person name="Strittmatter A."/>
            <person name="Gottschalk G."/>
            <person name="Borriss R."/>
        </authorList>
    </citation>
    <scope>NUCLEOTIDE SEQUENCE [LARGE SCALE GENOMIC DNA]</scope>
    <source>
        <strain>DSM 23117 / BGSC 10A6 / LMG 26770 / FZB42</strain>
    </source>
</reference>
<feature type="chain" id="PRO_0000348288" description="UPF0637 protein RBAM_014510">
    <location>
        <begin position="1"/>
        <end position="210"/>
    </location>
</feature>
<sequence>MTQMRFTKEDFDTFTIEGLDPRMEVLKEQVRPKLTLLGEHFAPTLSALTGDEMFPHVAKHARRSVNPPADSWVAFANSKRGYKKLPHFQIGLWDTHMFVWFAIIYESPIKEEYGRLLEAKQEDITKQIPGHFVWSPDHTKPGAYKQSDMDQEQLKTLFERLQTVKKAELLCGIQLQKEDVINMNNNEFLQTIEDAFRKLSFLYTLTQKVS</sequence>
<comment type="similarity">
    <text evidence="1">Belongs to the UPF0637 family.</text>
</comment>
<dbReference type="EMBL" id="CP000560">
    <property type="protein sequence ID" value="ABS73814.1"/>
    <property type="molecule type" value="Genomic_DNA"/>
</dbReference>
<dbReference type="RefSeq" id="WP_007409668.1">
    <property type="nucleotide sequence ID" value="NC_009725.2"/>
</dbReference>
<dbReference type="SMR" id="A7Z488"/>
<dbReference type="GeneID" id="93080585"/>
<dbReference type="KEGG" id="bay:RBAM_014510"/>
<dbReference type="HOGENOM" id="CLU_096059_0_0_9"/>
<dbReference type="Proteomes" id="UP000001120">
    <property type="component" value="Chromosome"/>
</dbReference>
<dbReference type="Gene3D" id="3.30.930.20">
    <property type="entry name" value="Protein of unknown function DUF1054"/>
    <property type="match status" value="1"/>
</dbReference>
<dbReference type="HAMAP" id="MF_01851">
    <property type="entry name" value="UPF0637"/>
    <property type="match status" value="1"/>
</dbReference>
<dbReference type="InterPro" id="IPR009403">
    <property type="entry name" value="UPF0637"/>
</dbReference>
<dbReference type="InterPro" id="IPR053707">
    <property type="entry name" value="UPF0637_domain_sf"/>
</dbReference>
<dbReference type="Pfam" id="PF06335">
    <property type="entry name" value="DUF1054"/>
    <property type="match status" value="1"/>
</dbReference>
<dbReference type="PIRSF" id="PIRSF021332">
    <property type="entry name" value="DUF1054"/>
    <property type="match status" value="1"/>
</dbReference>
<dbReference type="SUPFAM" id="SSF142913">
    <property type="entry name" value="YktB/PF0168-like"/>
    <property type="match status" value="1"/>
</dbReference>
<proteinExistence type="inferred from homology"/>
<gene>
    <name type="ordered locus">RBAM_014510</name>
</gene>
<accession>A7Z488</accession>